<proteinExistence type="inferred from homology"/>
<protein>
    <recommendedName>
        <fullName evidence="1">D-aminoacyl-tRNA deacylase</fullName>
        <shortName evidence="1">DTD</shortName>
        <ecNumber evidence="1">3.1.1.96</ecNumber>
    </recommendedName>
    <alternativeName>
        <fullName evidence="1">Gly-tRNA(Ala) deacylase</fullName>
    </alternativeName>
</protein>
<keyword id="KW-0963">Cytoplasm</keyword>
<keyword id="KW-0378">Hydrolase</keyword>
<keyword id="KW-1185">Reference proteome</keyword>
<keyword id="KW-0694">RNA-binding</keyword>
<keyword id="KW-0820">tRNA-binding</keyword>
<comment type="function">
    <text evidence="1">An aminoacyl-tRNA editing enzyme that deacylates mischarged D-aminoacyl-tRNAs. Also deacylates mischarged glycyl-tRNA(Ala), protecting cells against glycine mischarging by AlaRS. Acts via tRNA-based rather than protein-based catalysis; rejects L-amino acids rather than detecting D-amino acids in the active site. By recycling D-aminoacyl-tRNA to D-amino acids and free tRNA molecules, this enzyme counteracts the toxicity associated with the formation of D-aminoacyl-tRNA entities in vivo and helps enforce protein L-homochirality.</text>
</comment>
<comment type="catalytic activity">
    <reaction evidence="1">
        <text>glycyl-tRNA(Ala) + H2O = tRNA(Ala) + glycine + H(+)</text>
        <dbReference type="Rhea" id="RHEA:53744"/>
        <dbReference type="Rhea" id="RHEA-COMP:9657"/>
        <dbReference type="Rhea" id="RHEA-COMP:13640"/>
        <dbReference type="ChEBI" id="CHEBI:15377"/>
        <dbReference type="ChEBI" id="CHEBI:15378"/>
        <dbReference type="ChEBI" id="CHEBI:57305"/>
        <dbReference type="ChEBI" id="CHEBI:78442"/>
        <dbReference type="ChEBI" id="CHEBI:78522"/>
        <dbReference type="EC" id="3.1.1.96"/>
    </reaction>
</comment>
<comment type="catalytic activity">
    <reaction evidence="1">
        <text>a D-aminoacyl-tRNA + H2O = a tRNA + a D-alpha-amino acid + H(+)</text>
        <dbReference type="Rhea" id="RHEA:13953"/>
        <dbReference type="Rhea" id="RHEA-COMP:10123"/>
        <dbReference type="Rhea" id="RHEA-COMP:10124"/>
        <dbReference type="ChEBI" id="CHEBI:15377"/>
        <dbReference type="ChEBI" id="CHEBI:15378"/>
        <dbReference type="ChEBI" id="CHEBI:59871"/>
        <dbReference type="ChEBI" id="CHEBI:78442"/>
        <dbReference type="ChEBI" id="CHEBI:79333"/>
        <dbReference type="EC" id="3.1.1.96"/>
    </reaction>
</comment>
<comment type="subunit">
    <text evidence="1">Homodimer.</text>
</comment>
<comment type="subcellular location">
    <subcellularLocation>
        <location evidence="1">Cytoplasm</location>
    </subcellularLocation>
</comment>
<comment type="domain">
    <text evidence="1">A Gly-cisPro motif from one monomer fits into the active site of the other monomer to allow specific chiral rejection of L-amino acids.</text>
</comment>
<comment type="similarity">
    <text evidence="1">Belongs to the DTD family.</text>
</comment>
<evidence type="ECO:0000255" key="1">
    <source>
        <dbReference type="HAMAP-Rule" id="MF_00518"/>
    </source>
</evidence>
<dbReference type="EC" id="3.1.1.96" evidence="1"/>
<dbReference type="EMBL" id="CP001098">
    <property type="protein sequence ID" value="ACL69968.1"/>
    <property type="molecule type" value="Genomic_DNA"/>
</dbReference>
<dbReference type="RefSeq" id="WP_012636152.1">
    <property type="nucleotide sequence ID" value="NC_011899.1"/>
</dbReference>
<dbReference type="SMR" id="B8CXE9"/>
<dbReference type="STRING" id="373903.Hore_12180"/>
<dbReference type="KEGG" id="hor:Hore_12180"/>
<dbReference type="eggNOG" id="COG1490">
    <property type="taxonomic scope" value="Bacteria"/>
</dbReference>
<dbReference type="HOGENOM" id="CLU_076901_1_0_9"/>
<dbReference type="OrthoDB" id="9801395at2"/>
<dbReference type="Proteomes" id="UP000000719">
    <property type="component" value="Chromosome"/>
</dbReference>
<dbReference type="GO" id="GO:0005737">
    <property type="term" value="C:cytoplasm"/>
    <property type="evidence" value="ECO:0007669"/>
    <property type="project" value="UniProtKB-SubCell"/>
</dbReference>
<dbReference type="GO" id="GO:0051500">
    <property type="term" value="F:D-tyrosyl-tRNA(Tyr) deacylase activity"/>
    <property type="evidence" value="ECO:0007669"/>
    <property type="project" value="TreeGrafter"/>
</dbReference>
<dbReference type="GO" id="GO:0106026">
    <property type="term" value="F:Gly-tRNA(Ala) deacylase activity"/>
    <property type="evidence" value="ECO:0007669"/>
    <property type="project" value="UniProtKB-UniRule"/>
</dbReference>
<dbReference type="GO" id="GO:0043908">
    <property type="term" value="F:Ser(Gly)-tRNA(Ala) hydrolase activity"/>
    <property type="evidence" value="ECO:0007669"/>
    <property type="project" value="UniProtKB-UniRule"/>
</dbReference>
<dbReference type="GO" id="GO:0000049">
    <property type="term" value="F:tRNA binding"/>
    <property type="evidence" value="ECO:0007669"/>
    <property type="project" value="UniProtKB-UniRule"/>
</dbReference>
<dbReference type="GO" id="GO:0019478">
    <property type="term" value="P:D-amino acid catabolic process"/>
    <property type="evidence" value="ECO:0007669"/>
    <property type="project" value="UniProtKB-UniRule"/>
</dbReference>
<dbReference type="CDD" id="cd00563">
    <property type="entry name" value="Dtyr_deacylase"/>
    <property type="match status" value="1"/>
</dbReference>
<dbReference type="FunFam" id="3.50.80.10:FF:000001">
    <property type="entry name" value="D-aminoacyl-tRNA deacylase"/>
    <property type="match status" value="1"/>
</dbReference>
<dbReference type="Gene3D" id="3.50.80.10">
    <property type="entry name" value="D-tyrosyl-tRNA(Tyr) deacylase"/>
    <property type="match status" value="1"/>
</dbReference>
<dbReference type="HAMAP" id="MF_00518">
    <property type="entry name" value="Deacylase_Dtd"/>
    <property type="match status" value="1"/>
</dbReference>
<dbReference type="InterPro" id="IPR003732">
    <property type="entry name" value="Daa-tRNA_deacyls_DTD"/>
</dbReference>
<dbReference type="InterPro" id="IPR023509">
    <property type="entry name" value="DTD-like_sf"/>
</dbReference>
<dbReference type="NCBIfam" id="TIGR00256">
    <property type="entry name" value="D-aminoacyl-tRNA deacylase"/>
    <property type="match status" value="1"/>
</dbReference>
<dbReference type="PANTHER" id="PTHR10472:SF5">
    <property type="entry name" value="D-AMINOACYL-TRNA DEACYLASE 1"/>
    <property type="match status" value="1"/>
</dbReference>
<dbReference type="PANTHER" id="PTHR10472">
    <property type="entry name" value="D-TYROSYL-TRNA TYR DEACYLASE"/>
    <property type="match status" value="1"/>
</dbReference>
<dbReference type="Pfam" id="PF02580">
    <property type="entry name" value="Tyr_Deacylase"/>
    <property type="match status" value="1"/>
</dbReference>
<dbReference type="SUPFAM" id="SSF69500">
    <property type="entry name" value="DTD-like"/>
    <property type="match status" value="1"/>
</dbReference>
<gene>
    <name evidence="1" type="primary">dtd</name>
    <name type="ordered locus">Hore_12180</name>
</gene>
<feature type="chain" id="PRO_1000146200" description="D-aminoacyl-tRNA deacylase">
    <location>
        <begin position="1"/>
        <end position="149"/>
    </location>
</feature>
<feature type="short sequence motif" description="Gly-cisPro motif, important for rejection of L-amino acids" evidence="1">
    <location>
        <begin position="137"/>
        <end position="138"/>
    </location>
</feature>
<accession>B8CXE9</accession>
<organism>
    <name type="scientific">Halothermothrix orenii (strain H 168 / OCM 544 / DSM 9562)</name>
    <dbReference type="NCBI Taxonomy" id="373903"/>
    <lineage>
        <taxon>Bacteria</taxon>
        <taxon>Bacillati</taxon>
        <taxon>Bacillota</taxon>
        <taxon>Clostridia</taxon>
        <taxon>Halanaerobiales</taxon>
        <taxon>Halothermotrichaceae</taxon>
        <taxon>Halothermothrix</taxon>
    </lineage>
</organism>
<reference key="1">
    <citation type="journal article" date="2009" name="PLoS ONE">
        <title>Genome analysis of the anaerobic thermohalophilic bacterium Halothermothrix orenii.</title>
        <authorList>
            <person name="Mavromatis K."/>
            <person name="Ivanova N."/>
            <person name="Anderson I."/>
            <person name="Lykidis A."/>
            <person name="Hooper S.D."/>
            <person name="Sun H."/>
            <person name="Kunin V."/>
            <person name="Lapidus A."/>
            <person name="Hugenholtz P."/>
            <person name="Patel B."/>
            <person name="Kyrpides N.C."/>
        </authorList>
    </citation>
    <scope>NUCLEOTIDE SEQUENCE [LARGE SCALE GENOMIC DNA]</scope>
    <source>
        <strain>H 168 / OCM 544 / DSM 9562</strain>
    </source>
</reference>
<sequence>MRAVVQRVKEASVTVAGDIKGKIDKGLLVFVGIGEGDTEEDVRYLVDKIVNLRIFEDDTHKMNLSALDLNREILAVSQFTLYGDCRKGRRPNFTGAAKPRYAEKMYDTFVKFLKNTGLKVEEGVFQAMMEVNLINDGPVTILLDSNKQF</sequence>
<name>DTD_HALOH</name>